<name>RPOY_GEOKA</name>
<feature type="chain" id="PRO_0000163124" description="DNA-directed RNA polymerase subunit epsilon">
    <location>
        <begin position="1"/>
        <end position="71"/>
    </location>
</feature>
<protein>
    <recommendedName>
        <fullName evidence="1">DNA-directed RNA polymerase subunit epsilon</fullName>
        <shortName evidence="1">RNAP epsilon subunit</shortName>
        <ecNumber evidence="1">2.7.7.6</ecNumber>
    </recommendedName>
    <alternativeName>
        <fullName evidence="1">RNA polymerase epsilon subunit</fullName>
    </alternativeName>
    <alternativeName>
        <fullName evidence="1">Transcriptase subunit epsilon</fullName>
    </alternativeName>
</protein>
<sequence length="71" mass="8416">MIFKVFYQENADEAPVREKTKTLYIEAESERDVRRKLEGRPINIEYIQPLEGAHLEYEKKSPNFQVLEISS</sequence>
<gene>
    <name evidence="1" type="primary">rpoY</name>
    <name type="ordered locus">GK1054</name>
</gene>
<dbReference type="EC" id="2.7.7.6" evidence="1"/>
<dbReference type="EMBL" id="BA000043">
    <property type="protein sequence ID" value="BAD75339.1"/>
    <property type="molecule type" value="Genomic_DNA"/>
</dbReference>
<dbReference type="RefSeq" id="WP_011230554.1">
    <property type="nucleotide sequence ID" value="NC_006510.1"/>
</dbReference>
<dbReference type="SMR" id="Q5L141"/>
<dbReference type="STRING" id="235909.GK1054"/>
<dbReference type="KEGG" id="gka:GK1054"/>
<dbReference type="eggNOG" id="COG5503">
    <property type="taxonomic scope" value="Bacteria"/>
</dbReference>
<dbReference type="HOGENOM" id="CLU_187518_1_0_9"/>
<dbReference type="Proteomes" id="UP000001172">
    <property type="component" value="Chromosome"/>
</dbReference>
<dbReference type="GO" id="GO:0000428">
    <property type="term" value="C:DNA-directed RNA polymerase complex"/>
    <property type="evidence" value="ECO:0007669"/>
    <property type="project" value="UniProtKB-KW"/>
</dbReference>
<dbReference type="GO" id="GO:0003677">
    <property type="term" value="F:DNA binding"/>
    <property type="evidence" value="ECO:0007669"/>
    <property type="project" value="UniProtKB-UniRule"/>
</dbReference>
<dbReference type="GO" id="GO:0003899">
    <property type="term" value="F:DNA-directed RNA polymerase activity"/>
    <property type="evidence" value="ECO:0007669"/>
    <property type="project" value="UniProtKB-UniRule"/>
</dbReference>
<dbReference type="GO" id="GO:0006351">
    <property type="term" value="P:DNA-templated transcription"/>
    <property type="evidence" value="ECO:0007669"/>
    <property type="project" value="UniProtKB-UniRule"/>
</dbReference>
<dbReference type="Gene3D" id="3.10.20.730">
    <property type="entry name" value="RNAP, epsilon subunit-like"/>
    <property type="match status" value="1"/>
</dbReference>
<dbReference type="HAMAP" id="MF_01553">
    <property type="entry name" value="RNApol_bact_RpoY"/>
    <property type="match status" value="1"/>
</dbReference>
<dbReference type="InterPro" id="IPR009907">
    <property type="entry name" value="RpoY"/>
</dbReference>
<dbReference type="NCBIfam" id="NF010188">
    <property type="entry name" value="PRK13667.1"/>
    <property type="match status" value="1"/>
</dbReference>
<dbReference type="Pfam" id="PF07288">
    <property type="entry name" value="RpoY"/>
    <property type="match status" value="1"/>
</dbReference>
<keyword id="KW-0240">DNA-directed RNA polymerase</keyword>
<keyword id="KW-0548">Nucleotidyltransferase</keyword>
<keyword id="KW-1185">Reference proteome</keyword>
<keyword id="KW-0804">Transcription</keyword>
<keyword id="KW-0808">Transferase</keyword>
<comment type="function">
    <text evidence="1">A non-essential component of RNA polymerase (RNAP).</text>
</comment>
<comment type="catalytic activity">
    <reaction evidence="1">
        <text>RNA(n) + a ribonucleoside 5'-triphosphate = RNA(n+1) + diphosphate</text>
        <dbReference type="Rhea" id="RHEA:21248"/>
        <dbReference type="Rhea" id="RHEA-COMP:14527"/>
        <dbReference type="Rhea" id="RHEA-COMP:17342"/>
        <dbReference type="ChEBI" id="CHEBI:33019"/>
        <dbReference type="ChEBI" id="CHEBI:61557"/>
        <dbReference type="ChEBI" id="CHEBI:140395"/>
        <dbReference type="EC" id="2.7.7.6"/>
    </reaction>
</comment>
<comment type="subunit">
    <text evidence="1">RNAP is composed of a core of 2 alpha, a beta and a beta' subunit. The core is associated with a delta subunit, and at least one of epsilon or omega. When a sigma factor is associated with the core the holoenzyme is formed, which can initiate transcription.</text>
</comment>
<comment type="similarity">
    <text evidence="1">Belongs to the RNA polymerase subunit epsilon family.</text>
</comment>
<proteinExistence type="inferred from homology"/>
<reference key="1">
    <citation type="journal article" date="2004" name="Nucleic Acids Res.">
        <title>Thermoadaptation trait revealed by the genome sequence of thermophilic Geobacillus kaustophilus.</title>
        <authorList>
            <person name="Takami H."/>
            <person name="Takaki Y."/>
            <person name="Chee G.-J."/>
            <person name="Nishi S."/>
            <person name="Shimamura S."/>
            <person name="Suzuki H."/>
            <person name="Matsui S."/>
            <person name="Uchiyama I."/>
        </authorList>
    </citation>
    <scope>NUCLEOTIDE SEQUENCE [LARGE SCALE GENOMIC DNA]</scope>
    <source>
        <strain>HTA426</strain>
    </source>
</reference>
<evidence type="ECO:0000255" key="1">
    <source>
        <dbReference type="HAMAP-Rule" id="MF_01553"/>
    </source>
</evidence>
<organism>
    <name type="scientific">Geobacillus kaustophilus (strain HTA426)</name>
    <dbReference type="NCBI Taxonomy" id="235909"/>
    <lineage>
        <taxon>Bacteria</taxon>
        <taxon>Bacillati</taxon>
        <taxon>Bacillota</taxon>
        <taxon>Bacilli</taxon>
        <taxon>Bacillales</taxon>
        <taxon>Anoxybacillaceae</taxon>
        <taxon>Geobacillus</taxon>
        <taxon>Geobacillus thermoleovorans group</taxon>
    </lineage>
</organism>
<accession>Q5L141</accession>